<feature type="chain" id="PRO_0000230373" description="Small ribosomal subunit protein uS5">
    <location>
        <begin position="1"/>
        <end position="165"/>
    </location>
</feature>
<feature type="domain" description="S5 DRBM" evidence="1">
    <location>
        <begin position="10"/>
        <end position="73"/>
    </location>
</feature>
<accession>Q49ZF1</accession>
<name>RS5_STAS1</name>
<sequence length="165" mass="17582">MARREEAKEFEERVVTINRVAKVVKGGRRFRFTALVVVGDKNGRVGFGTGKAQEVPEAIKKAVEAAKKDLVVVPRVEGTTPHTITGRFSSGSVFMKPAAPGTGVIAGGPVRAVLELAGITDILSKSLGSNTPINMVRATINGLKNLKNAEDVAKLRGKSVEELYN</sequence>
<comment type="function">
    <text evidence="1">With S4 and S12 plays an important role in translational accuracy.</text>
</comment>
<comment type="function">
    <text evidence="1">Located at the back of the 30S subunit body where it stabilizes the conformation of the head with respect to the body.</text>
</comment>
<comment type="subunit">
    <text evidence="1">Part of the 30S ribosomal subunit. Contacts proteins S4 and S8.</text>
</comment>
<comment type="domain">
    <text>The N-terminal domain interacts with the head of the 30S subunit; the C-terminal domain interacts with the body and contacts protein S4. The interaction surface between S4 and S5 is involved in control of translational fidelity.</text>
</comment>
<comment type="similarity">
    <text evidence="1">Belongs to the universal ribosomal protein uS5 family.</text>
</comment>
<reference key="1">
    <citation type="journal article" date="2005" name="Proc. Natl. Acad. Sci. U.S.A.">
        <title>Whole genome sequence of Staphylococcus saprophyticus reveals the pathogenesis of uncomplicated urinary tract infection.</title>
        <authorList>
            <person name="Kuroda M."/>
            <person name="Yamashita A."/>
            <person name="Hirakawa H."/>
            <person name="Kumano M."/>
            <person name="Morikawa K."/>
            <person name="Higashide M."/>
            <person name="Maruyama A."/>
            <person name="Inose Y."/>
            <person name="Matoba K."/>
            <person name="Toh H."/>
            <person name="Kuhara S."/>
            <person name="Hattori M."/>
            <person name="Ohta T."/>
        </authorList>
    </citation>
    <scope>NUCLEOTIDE SEQUENCE [LARGE SCALE GENOMIC DNA]</scope>
    <source>
        <strain>ATCC 15305 / DSM 20229 / NCIMB 8711 / NCTC 7292 / S-41</strain>
    </source>
</reference>
<evidence type="ECO:0000255" key="1">
    <source>
        <dbReference type="HAMAP-Rule" id="MF_01307"/>
    </source>
</evidence>
<evidence type="ECO:0000305" key="2"/>
<organism>
    <name type="scientific">Staphylococcus saprophyticus subsp. saprophyticus (strain ATCC 15305 / DSM 20229 / NCIMB 8711 / NCTC 7292 / S-41)</name>
    <dbReference type="NCBI Taxonomy" id="342451"/>
    <lineage>
        <taxon>Bacteria</taxon>
        <taxon>Bacillati</taxon>
        <taxon>Bacillota</taxon>
        <taxon>Bacilli</taxon>
        <taxon>Bacillales</taxon>
        <taxon>Staphylococcaceae</taxon>
        <taxon>Staphylococcus</taxon>
    </lineage>
</organism>
<protein>
    <recommendedName>
        <fullName evidence="1">Small ribosomal subunit protein uS5</fullName>
    </recommendedName>
    <alternativeName>
        <fullName evidence="2">30S ribosomal protein S5</fullName>
    </alternativeName>
</protein>
<gene>
    <name evidence="1" type="primary">rpsE</name>
    <name type="ordered locus">SSP0680</name>
</gene>
<proteinExistence type="inferred from homology"/>
<keyword id="KW-1185">Reference proteome</keyword>
<keyword id="KW-0687">Ribonucleoprotein</keyword>
<keyword id="KW-0689">Ribosomal protein</keyword>
<keyword id="KW-0694">RNA-binding</keyword>
<keyword id="KW-0699">rRNA-binding</keyword>
<dbReference type="EMBL" id="AP008934">
    <property type="protein sequence ID" value="BAE17825.1"/>
    <property type="molecule type" value="Genomic_DNA"/>
</dbReference>
<dbReference type="RefSeq" id="WP_011302602.1">
    <property type="nucleotide sequence ID" value="NZ_MTGA01000036.1"/>
</dbReference>
<dbReference type="SMR" id="Q49ZF1"/>
<dbReference type="GeneID" id="97227397"/>
<dbReference type="KEGG" id="ssp:SSP0680"/>
<dbReference type="eggNOG" id="COG0098">
    <property type="taxonomic scope" value="Bacteria"/>
</dbReference>
<dbReference type="HOGENOM" id="CLU_065898_2_2_9"/>
<dbReference type="OrthoDB" id="9809045at2"/>
<dbReference type="Proteomes" id="UP000006371">
    <property type="component" value="Chromosome"/>
</dbReference>
<dbReference type="GO" id="GO:0015935">
    <property type="term" value="C:small ribosomal subunit"/>
    <property type="evidence" value="ECO:0007669"/>
    <property type="project" value="InterPro"/>
</dbReference>
<dbReference type="GO" id="GO:0019843">
    <property type="term" value="F:rRNA binding"/>
    <property type="evidence" value="ECO:0007669"/>
    <property type="project" value="UniProtKB-UniRule"/>
</dbReference>
<dbReference type="GO" id="GO:0003735">
    <property type="term" value="F:structural constituent of ribosome"/>
    <property type="evidence" value="ECO:0007669"/>
    <property type="project" value="InterPro"/>
</dbReference>
<dbReference type="GO" id="GO:0006412">
    <property type="term" value="P:translation"/>
    <property type="evidence" value="ECO:0007669"/>
    <property type="project" value="UniProtKB-UniRule"/>
</dbReference>
<dbReference type="FunFam" id="3.30.160.20:FF:000001">
    <property type="entry name" value="30S ribosomal protein S5"/>
    <property type="match status" value="1"/>
</dbReference>
<dbReference type="FunFam" id="3.30.230.10:FF:000002">
    <property type="entry name" value="30S ribosomal protein S5"/>
    <property type="match status" value="1"/>
</dbReference>
<dbReference type="Gene3D" id="3.30.160.20">
    <property type="match status" value="1"/>
</dbReference>
<dbReference type="Gene3D" id="3.30.230.10">
    <property type="match status" value="1"/>
</dbReference>
<dbReference type="HAMAP" id="MF_01307_B">
    <property type="entry name" value="Ribosomal_uS5_B"/>
    <property type="match status" value="1"/>
</dbReference>
<dbReference type="InterPro" id="IPR020568">
    <property type="entry name" value="Ribosomal_Su5_D2-typ_SF"/>
</dbReference>
<dbReference type="InterPro" id="IPR000851">
    <property type="entry name" value="Ribosomal_uS5"/>
</dbReference>
<dbReference type="InterPro" id="IPR005712">
    <property type="entry name" value="Ribosomal_uS5_bac-type"/>
</dbReference>
<dbReference type="InterPro" id="IPR005324">
    <property type="entry name" value="Ribosomal_uS5_C"/>
</dbReference>
<dbReference type="InterPro" id="IPR013810">
    <property type="entry name" value="Ribosomal_uS5_N"/>
</dbReference>
<dbReference type="InterPro" id="IPR018192">
    <property type="entry name" value="Ribosomal_uS5_N_CS"/>
</dbReference>
<dbReference type="InterPro" id="IPR014721">
    <property type="entry name" value="Ribsml_uS5_D2-typ_fold_subgr"/>
</dbReference>
<dbReference type="NCBIfam" id="TIGR01021">
    <property type="entry name" value="rpsE_bact"/>
    <property type="match status" value="1"/>
</dbReference>
<dbReference type="PANTHER" id="PTHR48277">
    <property type="entry name" value="MITOCHONDRIAL RIBOSOMAL PROTEIN S5"/>
    <property type="match status" value="1"/>
</dbReference>
<dbReference type="PANTHER" id="PTHR48277:SF1">
    <property type="entry name" value="MITOCHONDRIAL RIBOSOMAL PROTEIN S5"/>
    <property type="match status" value="1"/>
</dbReference>
<dbReference type="Pfam" id="PF00333">
    <property type="entry name" value="Ribosomal_S5"/>
    <property type="match status" value="1"/>
</dbReference>
<dbReference type="Pfam" id="PF03719">
    <property type="entry name" value="Ribosomal_S5_C"/>
    <property type="match status" value="1"/>
</dbReference>
<dbReference type="SUPFAM" id="SSF54768">
    <property type="entry name" value="dsRNA-binding domain-like"/>
    <property type="match status" value="1"/>
</dbReference>
<dbReference type="SUPFAM" id="SSF54211">
    <property type="entry name" value="Ribosomal protein S5 domain 2-like"/>
    <property type="match status" value="1"/>
</dbReference>
<dbReference type="PROSITE" id="PS00585">
    <property type="entry name" value="RIBOSOMAL_S5"/>
    <property type="match status" value="1"/>
</dbReference>
<dbReference type="PROSITE" id="PS50881">
    <property type="entry name" value="S5_DSRBD"/>
    <property type="match status" value="1"/>
</dbReference>